<evidence type="ECO:0000250" key="1"/>
<evidence type="ECO:0000255" key="2"/>
<evidence type="ECO:0000255" key="3">
    <source>
        <dbReference type="PROSITE-ProRule" id="PRU01230"/>
    </source>
</evidence>
<evidence type="ECO:0000305" key="4"/>
<proteinExistence type="inferred from homology"/>
<name>GPA11_DICDI</name>
<keyword id="KW-0342">GTP-binding</keyword>
<keyword id="KW-0449">Lipoprotein</keyword>
<keyword id="KW-0460">Magnesium</keyword>
<keyword id="KW-0479">Metal-binding</keyword>
<keyword id="KW-0519">Myristate</keyword>
<keyword id="KW-0547">Nucleotide-binding</keyword>
<keyword id="KW-1185">Reference proteome</keyword>
<keyword id="KW-0807">Transducer</keyword>
<reference key="1">
    <citation type="journal article" date="2002" name="Nature">
        <title>Sequence and analysis of chromosome 2 of Dictyostelium discoideum.</title>
        <authorList>
            <person name="Gloeckner G."/>
            <person name="Eichinger L."/>
            <person name="Szafranski K."/>
            <person name="Pachebat J.A."/>
            <person name="Bankier A.T."/>
            <person name="Dear P.H."/>
            <person name="Lehmann R."/>
            <person name="Baumgart C."/>
            <person name="Parra G."/>
            <person name="Abril J.F."/>
            <person name="Guigo R."/>
            <person name="Kumpf K."/>
            <person name="Tunggal B."/>
            <person name="Cox E.C."/>
            <person name="Quail M.A."/>
            <person name="Platzer M."/>
            <person name="Rosenthal A."/>
            <person name="Noegel A.A."/>
        </authorList>
    </citation>
    <scope>NUCLEOTIDE SEQUENCE [LARGE SCALE GENOMIC DNA]</scope>
    <source>
        <strain>AX4</strain>
    </source>
</reference>
<reference key="2">
    <citation type="journal article" date="2005" name="Nature">
        <title>The genome of the social amoeba Dictyostelium discoideum.</title>
        <authorList>
            <person name="Eichinger L."/>
            <person name="Pachebat J.A."/>
            <person name="Gloeckner G."/>
            <person name="Rajandream M.A."/>
            <person name="Sucgang R."/>
            <person name="Berriman M."/>
            <person name="Song J."/>
            <person name="Olsen R."/>
            <person name="Szafranski K."/>
            <person name="Xu Q."/>
            <person name="Tunggal B."/>
            <person name="Kummerfeld S."/>
            <person name="Madera M."/>
            <person name="Konfortov B.A."/>
            <person name="Rivero F."/>
            <person name="Bankier A.T."/>
            <person name="Lehmann R."/>
            <person name="Hamlin N."/>
            <person name="Davies R."/>
            <person name="Gaudet P."/>
            <person name="Fey P."/>
            <person name="Pilcher K."/>
            <person name="Chen G."/>
            <person name="Saunders D."/>
            <person name="Sodergren E.J."/>
            <person name="Davis P."/>
            <person name="Kerhornou A."/>
            <person name="Nie X."/>
            <person name="Hall N."/>
            <person name="Anjard C."/>
            <person name="Hemphill L."/>
            <person name="Bason N."/>
            <person name="Farbrother P."/>
            <person name="Desany B."/>
            <person name="Just E."/>
            <person name="Morio T."/>
            <person name="Rost R."/>
            <person name="Churcher C.M."/>
            <person name="Cooper J."/>
            <person name="Haydock S."/>
            <person name="van Driessche N."/>
            <person name="Cronin A."/>
            <person name="Goodhead I."/>
            <person name="Muzny D.M."/>
            <person name="Mourier T."/>
            <person name="Pain A."/>
            <person name="Lu M."/>
            <person name="Harper D."/>
            <person name="Lindsay R."/>
            <person name="Hauser H."/>
            <person name="James K.D."/>
            <person name="Quiles M."/>
            <person name="Madan Babu M."/>
            <person name="Saito T."/>
            <person name="Buchrieser C."/>
            <person name="Wardroper A."/>
            <person name="Felder M."/>
            <person name="Thangavelu M."/>
            <person name="Johnson D."/>
            <person name="Knights A."/>
            <person name="Loulseged H."/>
            <person name="Mungall K.L."/>
            <person name="Oliver K."/>
            <person name="Price C."/>
            <person name="Quail M.A."/>
            <person name="Urushihara H."/>
            <person name="Hernandez J."/>
            <person name="Rabbinowitsch E."/>
            <person name="Steffen D."/>
            <person name="Sanders M."/>
            <person name="Ma J."/>
            <person name="Kohara Y."/>
            <person name="Sharp S."/>
            <person name="Simmonds M.N."/>
            <person name="Spiegler S."/>
            <person name="Tivey A."/>
            <person name="Sugano S."/>
            <person name="White B."/>
            <person name="Walker D."/>
            <person name="Woodward J.R."/>
            <person name="Winckler T."/>
            <person name="Tanaka Y."/>
            <person name="Shaulsky G."/>
            <person name="Schleicher M."/>
            <person name="Weinstock G.M."/>
            <person name="Rosenthal A."/>
            <person name="Cox E.C."/>
            <person name="Chisholm R.L."/>
            <person name="Gibbs R.A."/>
            <person name="Loomis W.F."/>
            <person name="Platzer M."/>
            <person name="Kay R.R."/>
            <person name="Williams J.G."/>
            <person name="Dear P.H."/>
            <person name="Noegel A.A."/>
            <person name="Barrell B.G."/>
            <person name="Kuspa A."/>
        </authorList>
    </citation>
    <scope>NUCLEOTIDE SEQUENCE [LARGE SCALE GENOMIC DNA]</scope>
    <source>
        <strain>AX4</strain>
    </source>
</reference>
<accession>Q8T130</accession>
<accession>Q551T1</accession>
<comment type="similarity">
    <text evidence="4">Belongs to the G-alpha family.</text>
</comment>
<comment type="caution">
    <text evidence="4">Although this protein belongs to the G-alpha family, its Walker A GTP-binding motif is defective and therefore both its GTP-binding activity and function are dubious.</text>
</comment>
<feature type="initiator methionine" description="Removed" evidence="2">
    <location>
        <position position="1"/>
    </location>
</feature>
<feature type="chain" id="PRO_0000327591" description="Guanine nucleotide-binding protein-like alpha-11 subunit">
    <location>
        <begin position="2"/>
        <end position="359"/>
    </location>
</feature>
<feature type="domain" description="G-alpha" evidence="3">
    <location>
        <begin position="29"/>
        <end position="359"/>
    </location>
</feature>
<feature type="region of interest" description="G1 motif" evidence="3">
    <location>
        <begin position="32"/>
        <end position="45"/>
    </location>
</feature>
<feature type="region of interest" description="G2 motif" evidence="3">
    <location>
        <begin position="176"/>
        <end position="185"/>
    </location>
</feature>
<feature type="region of interest" description="G3 motif" evidence="3">
    <location>
        <begin position="200"/>
        <end position="209"/>
    </location>
</feature>
<feature type="region of interest" description="G4 motif" evidence="3">
    <location>
        <begin position="277"/>
        <end position="284"/>
    </location>
</feature>
<feature type="region of interest" description="G5 motif" evidence="3">
    <location>
        <begin position="337"/>
        <end position="342"/>
    </location>
</feature>
<feature type="binding site" evidence="1">
    <location>
        <position position="44"/>
    </location>
    <ligand>
        <name>Mg(2+)</name>
        <dbReference type="ChEBI" id="CHEBI:18420"/>
    </ligand>
</feature>
<feature type="binding site" evidence="1">
    <location>
        <begin position="178"/>
        <end position="185"/>
    </location>
    <ligand>
        <name>GTP</name>
        <dbReference type="ChEBI" id="CHEBI:37565"/>
    </ligand>
</feature>
<feature type="binding site" evidence="1">
    <location>
        <begin position="204"/>
        <end position="208"/>
    </location>
    <ligand>
        <name>GTP</name>
        <dbReference type="ChEBI" id="CHEBI:37565"/>
    </ligand>
</feature>
<feature type="binding site" evidence="1">
    <location>
        <begin position="281"/>
        <end position="284"/>
    </location>
    <ligand>
        <name>GTP</name>
        <dbReference type="ChEBI" id="CHEBI:37565"/>
    </ligand>
</feature>
<feature type="lipid moiety-binding region" description="N-myristoyl glycine" evidence="2">
    <location>
        <position position="2"/>
    </location>
</feature>
<sequence>MGSQFSVLNRKWLIERSIMIEKRKRRSNKLIKILMMGNENSAKSTFAKKVKSIYQSDKIENSDANSILPYIKLYLSNSFKDVIKFIQQHPQSPDTKPMVSTQLGIIAWDKLSSFNYIPFNFKPTKELAKYIYDICHDPLFKSYIYPIISSKREDAFYLIENCKRMSNDDYIPNDEDIIRCSKNNQSGVFDTKLEIGKSEFVFVDTGNQKCDRKKWVHQFEDVDIILFFLALDEFDLPPDEIKSQSQSVHDCYNKLNENILVFDEIVNNHFFSNTPVIVLFNKKEQLIEKLKTTTFSQHYPDYQSNSNNPNDIFSFISNQFKLRDHFPLNKRLFIHSFNSSDTNQIDFFQYVKKILEDTI</sequence>
<dbReference type="EMBL" id="AAFI02000014">
    <property type="protein sequence ID" value="EAL69252.1"/>
    <property type="molecule type" value="Genomic_DNA"/>
</dbReference>
<dbReference type="RefSeq" id="XP_643181.1">
    <property type="nucleotide sequence ID" value="XM_638089.1"/>
</dbReference>
<dbReference type="SMR" id="Q8T130"/>
<dbReference type="FunCoup" id="Q8T130">
    <property type="interactions" value="404"/>
</dbReference>
<dbReference type="STRING" id="44689.Q8T130"/>
<dbReference type="PaxDb" id="44689-DDB0230130"/>
<dbReference type="EnsemblProtists" id="EAL69252">
    <property type="protein sequence ID" value="EAL69252"/>
    <property type="gene ID" value="DDB_G0276343"/>
</dbReference>
<dbReference type="GeneID" id="8620452"/>
<dbReference type="KEGG" id="ddi:DDB_G0276343"/>
<dbReference type="dictyBase" id="DDB_G0276343">
    <property type="gene designation" value="gpaK"/>
</dbReference>
<dbReference type="VEuPathDB" id="AmoebaDB:DDB_G0276343"/>
<dbReference type="eggNOG" id="KOG0082">
    <property type="taxonomic scope" value="Eukaryota"/>
</dbReference>
<dbReference type="HOGENOM" id="CLU_772583_0_0_1"/>
<dbReference type="InParanoid" id="Q8T130"/>
<dbReference type="OMA" id="ENCKRMS"/>
<dbReference type="PhylomeDB" id="Q8T130"/>
<dbReference type="Reactome" id="R-DDI-112043">
    <property type="pathway name" value="PLC beta mediated events"/>
</dbReference>
<dbReference type="Reactome" id="R-DDI-170660">
    <property type="pathway name" value="Adenylate cyclase activating pathway"/>
</dbReference>
<dbReference type="Reactome" id="R-DDI-170670">
    <property type="pathway name" value="Adenylate cyclase inhibitory pathway"/>
</dbReference>
<dbReference type="Reactome" id="R-DDI-202040">
    <property type="pathway name" value="G-protein activation"/>
</dbReference>
<dbReference type="Reactome" id="R-DDI-399997">
    <property type="pathway name" value="Acetylcholine regulates insulin secretion"/>
</dbReference>
<dbReference type="Reactome" id="R-DDI-416476">
    <property type="pathway name" value="G alpha (q) signalling events"/>
</dbReference>
<dbReference type="Reactome" id="R-DDI-416482">
    <property type="pathway name" value="G alpha (12/13) signalling events"/>
</dbReference>
<dbReference type="Reactome" id="R-DDI-418592">
    <property type="pathway name" value="ADP signalling through P2Y purinoceptor 1"/>
</dbReference>
<dbReference type="Reactome" id="R-DDI-434316">
    <property type="pathway name" value="Fatty Acids bound to GPR40 (FFAR1) regulate insulin secretion"/>
</dbReference>
<dbReference type="Reactome" id="R-DDI-9013148">
    <property type="pathway name" value="CDC42 GTPase cycle"/>
</dbReference>
<dbReference type="Reactome" id="R-DDI-9013149">
    <property type="pathway name" value="RAC1 GTPase cycle"/>
</dbReference>
<dbReference type="Reactome" id="R-DDI-9856530">
    <property type="pathway name" value="High laminar flow shear stress activates signaling by PIEZO1 and PECAM1:CDH5:KDR in endothelial cells"/>
</dbReference>
<dbReference type="PRO" id="PR:Q8T130"/>
<dbReference type="Proteomes" id="UP000002195">
    <property type="component" value="Chromosome 2"/>
</dbReference>
<dbReference type="GO" id="GO:0005737">
    <property type="term" value="C:cytoplasm"/>
    <property type="evidence" value="ECO:0000318"/>
    <property type="project" value="GO_Central"/>
</dbReference>
<dbReference type="GO" id="GO:0005834">
    <property type="term" value="C:heterotrimeric G-protein complex"/>
    <property type="evidence" value="ECO:0000318"/>
    <property type="project" value="GO_Central"/>
</dbReference>
<dbReference type="GO" id="GO:0001664">
    <property type="term" value="F:G protein-coupled receptor binding"/>
    <property type="evidence" value="ECO:0000318"/>
    <property type="project" value="GO_Central"/>
</dbReference>
<dbReference type="GO" id="GO:0031683">
    <property type="term" value="F:G-protein beta/gamma-subunit complex binding"/>
    <property type="evidence" value="ECO:0000318"/>
    <property type="project" value="GO_Central"/>
</dbReference>
<dbReference type="GO" id="GO:0005525">
    <property type="term" value="F:GTP binding"/>
    <property type="evidence" value="ECO:0007669"/>
    <property type="project" value="UniProtKB-KW"/>
</dbReference>
<dbReference type="GO" id="GO:0003924">
    <property type="term" value="F:GTPase activity"/>
    <property type="evidence" value="ECO:0000318"/>
    <property type="project" value="GO_Central"/>
</dbReference>
<dbReference type="GO" id="GO:0046872">
    <property type="term" value="F:metal ion binding"/>
    <property type="evidence" value="ECO:0007669"/>
    <property type="project" value="UniProtKB-KW"/>
</dbReference>
<dbReference type="GO" id="GO:0007188">
    <property type="term" value="P:adenylate cyclase-modulating G protein-coupled receptor signaling pathway"/>
    <property type="evidence" value="ECO:0000318"/>
    <property type="project" value="GO_Central"/>
</dbReference>
<dbReference type="FunFam" id="3.40.50.300:FF:004201">
    <property type="entry name" value="Guanine nucleotide-binding protein-like alpha-10 subunit"/>
    <property type="match status" value="1"/>
</dbReference>
<dbReference type="FunFam" id="1.10.400.10:FF:000043">
    <property type="entry name" value="Guanine nucleotide-binding protein-like alpha-11 subunit"/>
    <property type="match status" value="1"/>
</dbReference>
<dbReference type="Gene3D" id="1.10.400.10">
    <property type="entry name" value="GI Alpha 1, domain 2-like"/>
    <property type="match status" value="1"/>
</dbReference>
<dbReference type="Gene3D" id="3.40.50.300">
    <property type="entry name" value="P-loop containing nucleotide triphosphate hydrolases"/>
    <property type="match status" value="1"/>
</dbReference>
<dbReference type="InterPro" id="IPR001019">
    <property type="entry name" value="Gprotein_alpha_su"/>
</dbReference>
<dbReference type="InterPro" id="IPR011025">
    <property type="entry name" value="GproteinA_insert"/>
</dbReference>
<dbReference type="InterPro" id="IPR027417">
    <property type="entry name" value="P-loop_NTPase"/>
</dbReference>
<dbReference type="PANTHER" id="PTHR10218">
    <property type="entry name" value="GTP-BINDING PROTEIN ALPHA SUBUNIT"/>
    <property type="match status" value="1"/>
</dbReference>
<dbReference type="PANTHER" id="PTHR10218:SF248">
    <property type="entry name" value="GUANINE NUCLEOTIDE-BINDING PROTEIN-LIKE ALPHA-11 SUBUNIT"/>
    <property type="match status" value="1"/>
</dbReference>
<dbReference type="Pfam" id="PF00503">
    <property type="entry name" value="G-alpha"/>
    <property type="match status" value="1"/>
</dbReference>
<dbReference type="PRINTS" id="PR00318">
    <property type="entry name" value="GPROTEINA"/>
</dbReference>
<dbReference type="SMART" id="SM00275">
    <property type="entry name" value="G_alpha"/>
    <property type="match status" value="1"/>
</dbReference>
<dbReference type="SUPFAM" id="SSF52540">
    <property type="entry name" value="P-loop containing nucleoside triphosphate hydrolases"/>
    <property type="match status" value="1"/>
</dbReference>
<dbReference type="SUPFAM" id="SSF47895">
    <property type="entry name" value="Transducin (alpha subunit), insertion domain"/>
    <property type="match status" value="1"/>
</dbReference>
<dbReference type="PROSITE" id="PS51882">
    <property type="entry name" value="G_ALPHA"/>
    <property type="match status" value="1"/>
</dbReference>
<protein>
    <recommendedName>
        <fullName>Guanine nucleotide-binding protein-like alpha-11 subunit</fullName>
    </recommendedName>
</protein>
<gene>
    <name type="primary">gpaK</name>
    <name type="synonym">gpa11</name>
    <name type="ORF">DDB_G0276343</name>
</gene>
<organism>
    <name type="scientific">Dictyostelium discoideum</name>
    <name type="common">Social amoeba</name>
    <dbReference type="NCBI Taxonomy" id="44689"/>
    <lineage>
        <taxon>Eukaryota</taxon>
        <taxon>Amoebozoa</taxon>
        <taxon>Evosea</taxon>
        <taxon>Eumycetozoa</taxon>
        <taxon>Dictyostelia</taxon>
        <taxon>Dictyosteliales</taxon>
        <taxon>Dictyosteliaceae</taxon>
        <taxon>Dictyostelium</taxon>
    </lineage>
</organism>